<accession>Q9SS83</accession>
<proteinExistence type="evidence at transcript level"/>
<evidence type="ECO:0000255" key="1"/>
<evidence type="ECO:0000305" key="2"/>
<feature type="transit peptide" description="Mitochondrion" evidence="1">
    <location>
        <begin position="1"/>
        <end position="30"/>
    </location>
</feature>
<feature type="chain" id="PRO_0000356079" description="Pentatricopeptide repeat-containing protein At3g09040, mitochondrial">
    <location>
        <begin position="31"/>
        <end position="1028"/>
    </location>
</feature>
<feature type="repeat" description="PPR 1">
    <location>
        <begin position="94"/>
        <end position="123"/>
    </location>
</feature>
<feature type="repeat" description="PPR 2">
    <location>
        <begin position="124"/>
        <end position="158"/>
    </location>
</feature>
<feature type="repeat" description="PPR 3">
    <location>
        <begin position="159"/>
        <end position="193"/>
    </location>
</feature>
<feature type="repeat" description="PPR 4">
    <location>
        <begin position="194"/>
        <end position="224"/>
    </location>
</feature>
<feature type="repeat" description="PPR 5">
    <location>
        <begin position="225"/>
        <end position="259"/>
    </location>
</feature>
<feature type="repeat" description="PPR 6">
    <location>
        <begin position="260"/>
        <end position="290"/>
    </location>
</feature>
<feature type="repeat" description="PPR 7">
    <location>
        <begin position="291"/>
        <end position="325"/>
    </location>
</feature>
<feature type="repeat" description="PPR 8">
    <location>
        <begin position="326"/>
        <end position="360"/>
    </location>
</feature>
<feature type="repeat" description="PPR 9">
    <location>
        <begin position="361"/>
        <end position="391"/>
    </location>
</feature>
<feature type="repeat" description="PPR 10">
    <location>
        <begin position="392"/>
        <end position="426"/>
    </location>
</feature>
<feature type="repeat" description="PPR 11">
    <location>
        <begin position="427"/>
        <end position="461"/>
    </location>
</feature>
<feature type="repeat" description="PPR 12">
    <location>
        <begin position="462"/>
        <end position="492"/>
    </location>
</feature>
<feature type="repeat" description="PPR 13">
    <location>
        <begin position="493"/>
        <end position="527"/>
    </location>
</feature>
<feature type="repeat" description="PPR 14">
    <location>
        <begin position="528"/>
        <end position="562"/>
    </location>
</feature>
<feature type="repeat" description="PPR 15">
    <location>
        <begin position="563"/>
        <end position="593"/>
    </location>
</feature>
<feature type="repeat" description="PPR 16">
    <location>
        <begin position="594"/>
        <end position="627"/>
    </location>
</feature>
<feature type="repeat" description="PPR 17">
    <location>
        <begin position="628"/>
        <end position="662"/>
    </location>
</feature>
<feature type="repeat" description="PPR 18">
    <location>
        <begin position="664"/>
        <end position="694"/>
    </location>
</feature>
<feature type="repeat" description="PPR 19">
    <location>
        <begin position="696"/>
        <end position="730"/>
    </location>
</feature>
<feature type="repeat" description="PPR 20">
    <location>
        <begin position="731"/>
        <end position="765"/>
    </location>
</feature>
<feature type="repeat" description="PPR 21">
    <location>
        <begin position="766"/>
        <end position="796"/>
    </location>
</feature>
<feature type="repeat" description="PPR 22">
    <location>
        <begin position="798"/>
        <end position="832"/>
    </location>
</feature>
<feature type="repeat" description="PPR 23">
    <location>
        <begin position="833"/>
        <end position="863"/>
    </location>
</feature>
<feature type="repeat" description="PPR 24">
    <location>
        <begin position="869"/>
        <end position="899"/>
    </location>
</feature>
<feature type="region of interest" description="Type E motif">
    <location>
        <begin position="904"/>
        <end position="979"/>
    </location>
</feature>
<feature type="region of interest" description="Type E(+) motif">
    <location>
        <begin position="980"/>
        <end position="1010"/>
    </location>
</feature>
<keyword id="KW-0496">Mitochondrion</keyword>
<keyword id="KW-1185">Reference proteome</keyword>
<keyword id="KW-0677">Repeat</keyword>
<keyword id="KW-0809">Transit peptide</keyword>
<dbReference type="EMBL" id="AC009326">
    <property type="protein sequence ID" value="AAD56320.1"/>
    <property type="molecule type" value="Genomic_DNA"/>
</dbReference>
<dbReference type="EMBL" id="CP002686">
    <property type="protein sequence ID" value="AEE74713.1"/>
    <property type="molecule type" value="Genomic_DNA"/>
</dbReference>
<dbReference type="EMBL" id="CP002686">
    <property type="protein sequence ID" value="ANM64907.1"/>
    <property type="molecule type" value="Genomic_DNA"/>
</dbReference>
<dbReference type="RefSeq" id="NP_001319506.1">
    <property type="nucleotide sequence ID" value="NM_001337795.1"/>
</dbReference>
<dbReference type="RefSeq" id="NP_187516.1">
    <property type="nucleotide sequence ID" value="NM_111738.1"/>
</dbReference>
<dbReference type="SMR" id="Q9SS83"/>
<dbReference type="FunCoup" id="Q9SS83">
    <property type="interactions" value="67"/>
</dbReference>
<dbReference type="STRING" id="3702.Q9SS83"/>
<dbReference type="PaxDb" id="3702-AT3G09040.1"/>
<dbReference type="EnsemblPlants" id="AT3G09040.1">
    <property type="protein sequence ID" value="AT3G09040.1"/>
    <property type="gene ID" value="AT3G09040"/>
</dbReference>
<dbReference type="EnsemblPlants" id="AT3G09040.4">
    <property type="protein sequence ID" value="AT3G09040.4"/>
    <property type="gene ID" value="AT3G09040"/>
</dbReference>
<dbReference type="GeneID" id="820057"/>
<dbReference type="Gramene" id="AT3G09040.1">
    <property type="protein sequence ID" value="AT3G09040.1"/>
    <property type="gene ID" value="AT3G09040"/>
</dbReference>
<dbReference type="Gramene" id="AT3G09040.4">
    <property type="protein sequence ID" value="AT3G09040.4"/>
    <property type="gene ID" value="AT3G09040"/>
</dbReference>
<dbReference type="KEGG" id="ath:AT3G09040"/>
<dbReference type="Araport" id="AT3G09040"/>
<dbReference type="TAIR" id="AT3G09040">
    <property type="gene designation" value="MEF12"/>
</dbReference>
<dbReference type="eggNOG" id="KOG4197">
    <property type="taxonomic scope" value="Eukaryota"/>
</dbReference>
<dbReference type="HOGENOM" id="CLU_002706_15_0_1"/>
<dbReference type="InParanoid" id="Q9SS83"/>
<dbReference type="OMA" id="YFLNMRK"/>
<dbReference type="PhylomeDB" id="Q9SS83"/>
<dbReference type="PRO" id="PR:Q9SS83"/>
<dbReference type="Proteomes" id="UP000006548">
    <property type="component" value="Chromosome 3"/>
</dbReference>
<dbReference type="ExpressionAtlas" id="Q9SS83">
    <property type="expression patterns" value="baseline and differential"/>
</dbReference>
<dbReference type="GO" id="GO:0005739">
    <property type="term" value="C:mitochondrion"/>
    <property type="evidence" value="ECO:0007669"/>
    <property type="project" value="UniProtKB-SubCell"/>
</dbReference>
<dbReference type="GO" id="GO:0003723">
    <property type="term" value="F:RNA binding"/>
    <property type="evidence" value="ECO:0007669"/>
    <property type="project" value="InterPro"/>
</dbReference>
<dbReference type="GO" id="GO:0009451">
    <property type="term" value="P:RNA modification"/>
    <property type="evidence" value="ECO:0007669"/>
    <property type="project" value="InterPro"/>
</dbReference>
<dbReference type="FunFam" id="1.25.40.10:FF:000280">
    <property type="entry name" value="Pentatricopeptide repeat-containing protein"/>
    <property type="match status" value="1"/>
</dbReference>
<dbReference type="FunFam" id="1.25.40.10:FF:002575">
    <property type="entry name" value="Pentatricopeptide repeat-containing protein At3g09040, mitochondrial"/>
    <property type="match status" value="1"/>
</dbReference>
<dbReference type="FunFam" id="1.25.40.10:FF:000031">
    <property type="entry name" value="Pentatricopeptide repeat-containing protein mitochondrial"/>
    <property type="match status" value="1"/>
</dbReference>
<dbReference type="FunFam" id="1.25.40.10:FF:000890">
    <property type="entry name" value="Pentatricopeptide repeat-containing protein, mitochondrial"/>
    <property type="match status" value="1"/>
</dbReference>
<dbReference type="FunFam" id="1.25.40.10:FF:001218">
    <property type="entry name" value="Pentatricopeptide repeat-containing protein, mitochondrial"/>
    <property type="match status" value="1"/>
</dbReference>
<dbReference type="FunFam" id="1.25.40.10:FF:001806">
    <property type="entry name" value="Pentatricopeptide repeat-containing protein, mitochondrial"/>
    <property type="match status" value="1"/>
</dbReference>
<dbReference type="FunFam" id="1.25.40.10:FF:002146">
    <property type="entry name" value="Pentatricopeptide repeat-containing protein, mitochondrial"/>
    <property type="match status" value="1"/>
</dbReference>
<dbReference type="Gene3D" id="1.25.40.10">
    <property type="entry name" value="Tetratricopeptide repeat domain"/>
    <property type="match status" value="7"/>
</dbReference>
<dbReference type="InterPro" id="IPR046848">
    <property type="entry name" value="E_motif"/>
</dbReference>
<dbReference type="InterPro" id="IPR002885">
    <property type="entry name" value="Pentatricopeptide_rpt"/>
</dbReference>
<dbReference type="InterPro" id="IPR046960">
    <property type="entry name" value="PPR_At4g14850-like_plant"/>
</dbReference>
<dbReference type="InterPro" id="IPR011990">
    <property type="entry name" value="TPR-like_helical_dom_sf"/>
</dbReference>
<dbReference type="NCBIfam" id="TIGR00756">
    <property type="entry name" value="PPR"/>
    <property type="match status" value="7"/>
</dbReference>
<dbReference type="PANTHER" id="PTHR47926">
    <property type="entry name" value="PENTATRICOPEPTIDE REPEAT-CONTAINING PROTEIN"/>
    <property type="match status" value="1"/>
</dbReference>
<dbReference type="PANTHER" id="PTHR47926:SF441">
    <property type="entry name" value="PENTATRICOPEPTIDE REPEAT-CONTAINING PROTEIN"/>
    <property type="match status" value="1"/>
</dbReference>
<dbReference type="Pfam" id="PF20431">
    <property type="entry name" value="E_motif"/>
    <property type="match status" value="1"/>
</dbReference>
<dbReference type="Pfam" id="PF01535">
    <property type="entry name" value="PPR"/>
    <property type="match status" value="6"/>
</dbReference>
<dbReference type="Pfam" id="PF13041">
    <property type="entry name" value="PPR_2"/>
    <property type="match status" value="5"/>
</dbReference>
<dbReference type="PROSITE" id="PS51375">
    <property type="entry name" value="PPR"/>
    <property type="match status" value="19"/>
</dbReference>
<gene>
    <name type="primary">PCMP-E88</name>
    <name type="ordered locus">At3g09040</name>
    <name type="ORF">MZB10.7</name>
</gene>
<reference key="1">
    <citation type="journal article" date="2000" name="Nature">
        <title>Sequence and analysis of chromosome 3 of the plant Arabidopsis thaliana.</title>
        <authorList>
            <person name="Salanoubat M."/>
            <person name="Lemcke K."/>
            <person name="Rieger M."/>
            <person name="Ansorge W."/>
            <person name="Unseld M."/>
            <person name="Fartmann B."/>
            <person name="Valle G."/>
            <person name="Bloecker H."/>
            <person name="Perez-Alonso M."/>
            <person name="Obermaier B."/>
            <person name="Delseny M."/>
            <person name="Boutry M."/>
            <person name="Grivell L.A."/>
            <person name="Mache R."/>
            <person name="Puigdomenech P."/>
            <person name="De Simone V."/>
            <person name="Choisne N."/>
            <person name="Artiguenave F."/>
            <person name="Robert C."/>
            <person name="Brottier P."/>
            <person name="Wincker P."/>
            <person name="Cattolico L."/>
            <person name="Weissenbach J."/>
            <person name="Saurin W."/>
            <person name="Quetier F."/>
            <person name="Schaefer M."/>
            <person name="Mueller-Auer S."/>
            <person name="Gabel C."/>
            <person name="Fuchs M."/>
            <person name="Benes V."/>
            <person name="Wurmbach E."/>
            <person name="Drzonek H."/>
            <person name="Erfle H."/>
            <person name="Jordan N."/>
            <person name="Bangert S."/>
            <person name="Wiedelmann R."/>
            <person name="Kranz H."/>
            <person name="Voss H."/>
            <person name="Holland R."/>
            <person name="Brandt P."/>
            <person name="Nyakatura G."/>
            <person name="Vezzi A."/>
            <person name="D'Angelo M."/>
            <person name="Pallavicini A."/>
            <person name="Toppo S."/>
            <person name="Simionati B."/>
            <person name="Conrad A."/>
            <person name="Hornischer K."/>
            <person name="Kauer G."/>
            <person name="Loehnert T.-H."/>
            <person name="Nordsiek G."/>
            <person name="Reichelt J."/>
            <person name="Scharfe M."/>
            <person name="Schoen O."/>
            <person name="Bargues M."/>
            <person name="Terol J."/>
            <person name="Climent J."/>
            <person name="Navarro P."/>
            <person name="Collado C."/>
            <person name="Perez-Perez A."/>
            <person name="Ottenwaelder B."/>
            <person name="Duchemin D."/>
            <person name="Cooke R."/>
            <person name="Laudie M."/>
            <person name="Berger-Llauro C."/>
            <person name="Purnelle B."/>
            <person name="Masuy D."/>
            <person name="de Haan M."/>
            <person name="Maarse A.C."/>
            <person name="Alcaraz J.-P."/>
            <person name="Cottet A."/>
            <person name="Casacuberta E."/>
            <person name="Monfort A."/>
            <person name="Argiriou A."/>
            <person name="Flores M."/>
            <person name="Liguori R."/>
            <person name="Vitale D."/>
            <person name="Mannhaupt G."/>
            <person name="Haase D."/>
            <person name="Schoof H."/>
            <person name="Rudd S."/>
            <person name="Zaccaria P."/>
            <person name="Mewes H.-W."/>
            <person name="Mayer K.F.X."/>
            <person name="Kaul S."/>
            <person name="Town C.D."/>
            <person name="Koo H.L."/>
            <person name="Tallon L.J."/>
            <person name="Jenkins J."/>
            <person name="Rooney T."/>
            <person name="Rizzo M."/>
            <person name="Walts A."/>
            <person name="Utterback T."/>
            <person name="Fujii C.Y."/>
            <person name="Shea T.P."/>
            <person name="Creasy T.H."/>
            <person name="Haas B."/>
            <person name="Maiti R."/>
            <person name="Wu D."/>
            <person name="Peterson J."/>
            <person name="Van Aken S."/>
            <person name="Pai G."/>
            <person name="Militscher J."/>
            <person name="Sellers P."/>
            <person name="Gill J.E."/>
            <person name="Feldblyum T.V."/>
            <person name="Preuss D."/>
            <person name="Lin X."/>
            <person name="Nierman W.C."/>
            <person name="Salzberg S.L."/>
            <person name="White O."/>
            <person name="Venter J.C."/>
            <person name="Fraser C.M."/>
            <person name="Kaneko T."/>
            <person name="Nakamura Y."/>
            <person name="Sato S."/>
            <person name="Kato T."/>
            <person name="Asamizu E."/>
            <person name="Sasamoto S."/>
            <person name="Kimura T."/>
            <person name="Idesawa K."/>
            <person name="Kawashima K."/>
            <person name="Kishida Y."/>
            <person name="Kiyokawa C."/>
            <person name="Kohara M."/>
            <person name="Matsumoto M."/>
            <person name="Matsuno A."/>
            <person name="Muraki A."/>
            <person name="Nakayama S."/>
            <person name="Nakazaki N."/>
            <person name="Shinpo S."/>
            <person name="Takeuchi C."/>
            <person name="Wada T."/>
            <person name="Watanabe A."/>
            <person name="Yamada M."/>
            <person name="Yasuda M."/>
            <person name="Tabata S."/>
        </authorList>
    </citation>
    <scope>NUCLEOTIDE SEQUENCE [LARGE SCALE GENOMIC DNA]</scope>
    <source>
        <strain>cv. Columbia</strain>
    </source>
</reference>
<reference key="2">
    <citation type="journal article" date="2017" name="Plant J.">
        <title>Araport11: a complete reannotation of the Arabidopsis thaliana reference genome.</title>
        <authorList>
            <person name="Cheng C.Y."/>
            <person name="Krishnakumar V."/>
            <person name="Chan A.P."/>
            <person name="Thibaud-Nissen F."/>
            <person name="Schobel S."/>
            <person name="Town C.D."/>
        </authorList>
    </citation>
    <scope>GENOME REANNOTATION</scope>
    <source>
        <strain>cv. Columbia</strain>
    </source>
</reference>
<reference key="3">
    <citation type="journal article" date="2004" name="Plant Cell">
        <title>Genome-wide analysis of Arabidopsis pentatricopeptide repeat proteins reveals their essential role in organelle biogenesis.</title>
        <authorList>
            <person name="Lurin C."/>
            <person name="Andres C."/>
            <person name="Aubourg S."/>
            <person name="Bellaoui M."/>
            <person name="Bitton F."/>
            <person name="Bruyere C."/>
            <person name="Caboche M."/>
            <person name="Debast C."/>
            <person name="Gualberto J."/>
            <person name="Hoffmann B."/>
            <person name="Lecharny A."/>
            <person name="Le Ret M."/>
            <person name="Martin-Magniette M.-L."/>
            <person name="Mireau H."/>
            <person name="Peeters N."/>
            <person name="Renou J.-P."/>
            <person name="Szurek B."/>
            <person name="Taconnat L."/>
            <person name="Small I."/>
        </authorList>
    </citation>
    <scope>GENE FAMILY</scope>
</reference>
<comment type="subcellular location">
    <subcellularLocation>
        <location evidence="2">Mitochondrion</location>
    </subcellularLocation>
</comment>
<comment type="similarity">
    <text evidence="2">Belongs to the PPR family. PCMP-E subfamily.</text>
</comment>
<comment type="online information" name="Pentatricopeptide repeat proteins">
    <link uri="https://ppr.plantenergy.uwa.edu.au"/>
</comment>
<sequence>MYFRVLLTPSSAMFDSFSFVRRLSYSPDLGRRIYGHVLPSHDQIHQRLLEICLGQCKLFKSRKVFDEMPQRLALALRIGKAVHSKSLILGIDSEGRLGNAIVDLYAKCAQVSYAEKQFDFLEKDVTAWNSMLSMYSSIGKPGKVLRSFVSLFENQIFPNKFTFSIVLSTCARETNVEFGRQIHCSMIKMGLERNSYCGGALVDMYAKCDRISDARRVFEWIVDPNTVCWTCLFSGYVKAGLPEEAVLVFERMRDEGHRPDHLAFVTVINTYIRLGKLKDARLLFGEMSSPDVVAWNVMISGHGKRGCETVAIEYFFNMRKSSVKSTRSTLGSVLSAIGIVANLDLGLVVHAEAIKLGLASNIYVGSSLVSMYSKCEKMEAAAKVFEALEEKNDVFWNAMIRGYAHNGESHKVMELFMDMKSSGYNIDDFTFTSLLSTCAASHDLEMGSQFHSIIIKKKLAKNLFVGNALVDMYAKCGALEDARQIFERMCDRDNVTWNTIIGSYVQDENESEAFDLFKRMNLCGIVSDGACLASTLKACTHVHGLYQGKQVHCLSVKCGLDRDLHTGSSLIDMYSKCGIIKDARKVFSSLPEWSVVSMNALIAGYSQNNLEEAVVLFQEMLTRGVNPSEITFATIVEACHKPESLTLGTQFHGQITKRGFSSEGEYLGISLLGMYMNSRGMTEACALFSELSSPKSIVLWTGMMSGHSQNGFYEEALKFYKEMRHDGVLPDQATFVTVLRVCSVLSSLREGRAIHSLIFHLAHDLDELTSNTLIDMYAKCGDMKGSSQVFDEMRRRSNVVSWNSLINGYAKNGYAEDALKIFDSMRQSHIMPDEITFLGVLTACSHAGKVSDGRKIFEMMIGQYGIEARVDHVACMVDLLGRWGYLQEADDFIEAQNLKPDARLWSSLLGACRIHGDDIRGEISAEKLIELEPQNSSAYVLLSNIYASQGCWEKANALRKVMRDRGVKKVPGYSWIDVEQRTHIFAAGDKSHSEIGKIEMFLEDLYDLMKDDAVVNPDIVEQGSLDCV</sequence>
<organism>
    <name type="scientific">Arabidopsis thaliana</name>
    <name type="common">Mouse-ear cress</name>
    <dbReference type="NCBI Taxonomy" id="3702"/>
    <lineage>
        <taxon>Eukaryota</taxon>
        <taxon>Viridiplantae</taxon>
        <taxon>Streptophyta</taxon>
        <taxon>Embryophyta</taxon>
        <taxon>Tracheophyta</taxon>
        <taxon>Spermatophyta</taxon>
        <taxon>Magnoliopsida</taxon>
        <taxon>eudicotyledons</taxon>
        <taxon>Gunneridae</taxon>
        <taxon>Pentapetalae</taxon>
        <taxon>rosids</taxon>
        <taxon>malvids</taxon>
        <taxon>Brassicales</taxon>
        <taxon>Brassicaceae</taxon>
        <taxon>Camelineae</taxon>
        <taxon>Arabidopsis</taxon>
    </lineage>
</organism>
<name>PP220_ARATH</name>
<protein>
    <recommendedName>
        <fullName>Pentatricopeptide repeat-containing protein At3g09040, mitochondrial</fullName>
    </recommendedName>
</protein>